<organism>
    <name type="scientific">Vibrio cholerae serotype O1 (strain ATCC 39315 / El Tor Inaba N16961)</name>
    <dbReference type="NCBI Taxonomy" id="243277"/>
    <lineage>
        <taxon>Bacteria</taxon>
        <taxon>Pseudomonadati</taxon>
        <taxon>Pseudomonadota</taxon>
        <taxon>Gammaproteobacteria</taxon>
        <taxon>Vibrionales</taxon>
        <taxon>Vibrionaceae</taxon>
        <taxon>Vibrio</taxon>
    </lineage>
</organism>
<dbReference type="EC" id="2.3.1.129" evidence="1"/>
<dbReference type="EMBL" id="AE003852">
    <property type="protein sequence ID" value="AAF95392.1"/>
    <property type="molecule type" value="Genomic_DNA"/>
</dbReference>
<dbReference type="PIR" id="B82101">
    <property type="entry name" value="B82101"/>
</dbReference>
<dbReference type="RefSeq" id="NP_231879.1">
    <property type="nucleotide sequence ID" value="NC_002505.1"/>
</dbReference>
<dbReference type="RefSeq" id="WP_000581103.1">
    <property type="nucleotide sequence ID" value="NZ_LT906614.1"/>
</dbReference>
<dbReference type="SMR" id="Q9KPW4"/>
<dbReference type="STRING" id="243277.VC_2248"/>
<dbReference type="DNASU" id="2613170"/>
<dbReference type="EnsemblBacteria" id="AAF95392">
    <property type="protein sequence ID" value="AAF95392"/>
    <property type="gene ID" value="VC_2248"/>
</dbReference>
<dbReference type="GeneID" id="89513757"/>
<dbReference type="KEGG" id="vch:VC_2248"/>
<dbReference type="PATRIC" id="fig|243277.26.peg.2144"/>
<dbReference type="eggNOG" id="COG1043">
    <property type="taxonomic scope" value="Bacteria"/>
</dbReference>
<dbReference type="HOGENOM" id="CLU_061249_0_1_6"/>
<dbReference type="BioCyc" id="MetaCyc:FY484_RS11235-MONOMER"/>
<dbReference type="UniPathway" id="UPA00359">
    <property type="reaction ID" value="UER00477"/>
</dbReference>
<dbReference type="Proteomes" id="UP000000584">
    <property type="component" value="Chromosome 1"/>
</dbReference>
<dbReference type="GO" id="GO:0005737">
    <property type="term" value="C:cytoplasm"/>
    <property type="evidence" value="ECO:0007669"/>
    <property type="project" value="UniProtKB-SubCell"/>
</dbReference>
<dbReference type="GO" id="GO:0016020">
    <property type="term" value="C:membrane"/>
    <property type="evidence" value="ECO:0007669"/>
    <property type="project" value="GOC"/>
</dbReference>
<dbReference type="GO" id="GO:0008780">
    <property type="term" value="F:acyl-[acyl-carrier-protein]-UDP-N-acetylglucosamine O-acyltransferase activity"/>
    <property type="evidence" value="ECO:0007669"/>
    <property type="project" value="UniProtKB-UniRule"/>
</dbReference>
<dbReference type="GO" id="GO:0009245">
    <property type="term" value="P:lipid A biosynthetic process"/>
    <property type="evidence" value="ECO:0007669"/>
    <property type="project" value="UniProtKB-UniRule"/>
</dbReference>
<dbReference type="CDD" id="cd03351">
    <property type="entry name" value="LbH_UDP-GlcNAc_AT"/>
    <property type="match status" value="1"/>
</dbReference>
<dbReference type="FunFam" id="2.160.10.10:FF:000003">
    <property type="entry name" value="Acyl-[acyl-carrier-protein]--UDP-N-acetylglucosamine O-acyltransferase"/>
    <property type="match status" value="1"/>
</dbReference>
<dbReference type="Gene3D" id="2.160.10.10">
    <property type="entry name" value="Hexapeptide repeat proteins"/>
    <property type="match status" value="1"/>
</dbReference>
<dbReference type="Gene3D" id="1.20.1180.10">
    <property type="entry name" value="Udp N-acetylglucosamine O-acyltransferase, C-terminal domain"/>
    <property type="match status" value="1"/>
</dbReference>
<dbReference type="HAMAP" id="MF_00387">
    <property type="entry name" value="LpxA"/>
    <property type="match status" value="1"/>
</dbReference>
<dbReference type="InterPro" id="IPR029098">
    <property type="entry name" value="Acetyltransf_C"/>
</dbReference>
<dbReference type="InterPro" id="IPR037157">
    <property type="entry name" value="Acetyltransf_C_sf"/>
</dbReference>
<dbReference type="InterPro" id="IPR001451">
    <property type="entry name" value="Hexapep"/>
</dbReference>
<dbReference type="InterPro" id="IPR018357">
    <property type="entry name" value="Hexapep_transf_CS"/>
</dbReference>
<dbReference type="InterPro" id="IPR010137">
    <property type="entry name" value="Lipid_A_LpxA"/>
</dbReference>
<dbReference type="InterPro" id="IPR011004">
    <property type="entry name" value="Trimer_LpxA-like_sf"/>
</dbReference>
<dbReference type="NCBIfam" id="TIGR01852">
    <property type="entry name" value="lipid_A_lpxA"/>
    <property type="match status" value="1"/>
</dbReference>
<dbReference type="NCBIfam" id="NF003657">
    <property type="entry name" value="PRK05289.1"/>
    <property type="match status" value="1"/>
</dbReference>
<dbReference type="PANTHER" id="PTHR43480">
    <property type="entry name" value="ACYL-[ACYL-CARRIER-PROTEIN]--UDP-N-ACETYLGLUCOSAMINE O-ACYLTRANSFERASE"/>
    <property type="match status" value="1"/>
</dbReference>
<dbReference type="PANTHER" id="PTHR43480:SF1">
    <property type="entry name" value="ACYL-[ACYL-CARRIER-PROTEIN]--UDP-N-ACETYLGLUCOSAMINE O-ACYLTRANSFERASE, MITOCHONDRIAL-RELATED"/>
    <property type="match status" value="1"/>
</dbReference>
<dbReference type="Pfam" id="PF13720">
    <property type="entry name" value="Acetyltransf_11"/>
    <property type="match status" value="1"/>
</dbReference>
<dbReference type="Pfam" id="PF00132">
    <property type="entry name" value="Hexapep"/>
    <property type="match status" value="2"/>
</dbReference>
<dbReference type="PIRSF" id="PIRSF000456">
    <property type="entry name" value="UDP-GlcNAc_acltr"/>
    <property type="match status" value="1"/>
</dbReference>
<dbReference type="SUPFAM" id="SSF51161">
    <property type="entry name" value="Trimeric LpxA-like enzymes"/>
    <property type="match status" value="1"/>
</dbReference>
<dbReference type="PROSITE" id="PS00101">
    <property type="entry name" value="HEXAPEP_TRANSFERASES"/>
    <property type="match status" value="1"/>
</dbReference>
<proteinExistence type="inferred from homology"/>
<feature type="chain" id="PRO_0000188071" description="Acyl-[acyl-carrier-protein]--UDP-N-acetylglucosamine O-acyltransferase">
    <location>
        <begin position="1"/>
        <end position="262"/>
    </location>
</feature>
<gene>
    <name evidence="1" type="primary">lpxA</name>
    <name type="ordered locus">VC_2248</name>
</gene>
<name>LPXA_VIBCH</name>
<keyword id="KW-0012">Acyltransferase</keyword>
<keyword id="KW-0963">Cytoplasm</keyword>
<keyword id="KW-0441">Lipid A biosynthesis</keyword>
<keyword id="KW-0444">Lipid biosynthesis</keyword>
<keyword id="KW-0443">Lipid metabolism</keyword>
<keyword id="KW-1185">Reference proteome</keyword>
<keyword id="KW-0677">Repeat</keyword>
<keyword id="KW-0808">Transferase</keyword>
<protein>
    <recommendedName>
        <fullName evidence="1">Acyl-[acyl-carrier-protein]--UDP-N-acetylglucosamine O-acyltransferase</fullName>
        <shortName evidence="1">UDP-N-acetylglucosamine acyltransferase</shortName>
        <ecNumber evidence="1">2.3.1.129</ecNumber>
    </recommendedName>
</protein>
<reference key="1">
    <citation type="journal article" date="2000" name="Nature">
        <title>DNA sequence of both chromosomes of the cholera pathogen Vibrio cholerae.</title>
        <authorList>
            <person name="Heidelberg J.F."/>
            <person name="Eisen J.A."/>
            <person name="Nelson W.C."/>
            <person name="Clayton R.A."/>
            <person name="Gwinn M.L."/>
            <person name="Dodson R.J."/>
            <person name="Haft D.H."/>
            <person name="Hickey E.K."/>
            <person name="Peterson J.D."/>
            <person name="Umayam L.A."/>
            <person name="Gill S.R."/>
            <person name="Nelson K.E."/>
            <person name="Read T.D."/>
            <person name="Tettelin H."/>
            <person name="Richardson D.L."/>
            <person name="Ermolaeva M.D."/>
            <person name="Vamathevan J.J."/>
            <person name="Bass S."/>
            <person name="Qin H."/>
            <person name="Dragoi I."/>
            <person name="Sellers P."/>
            <person name="McDonald L.A."/>
            <person name="Utterback T.R."/>
            <person name="Fleischmann R.D."/>
            <person name="Nierman W.C."/>
            <person name="White O."/>
            <person name="Salzberg S.L."/>
            <person name="Smith H.O."/>
            <person name="Colwell R.R."/>
            <person name="Mekalanos J.J."/>
            <person name="Venter J.C."/>
            <person name="Fraser C.M."/>
        </authorList>
    </citation>
    <scope>NUCLEOTIDE SEQUENCE [LARGE SCALE GENOMIC DNA]</scope>
    <source>
        <strain>ATCC 39315 / El Tor Inaba N16961</strain>
    </source>
</reference>
<accession>Q9KPW4</accession>
<comment type="function">
    <text evidence="1">Involved in the biosynthesis of lipid A, a phosphorylated glycolipid that anchors the lipopolysaccharide to the outer membrane of the cell.</text>
</comment>
<comment type="catalytic activity">
    <reaction evidence="1">
        <text>a (3R)-hydroxyacyl-[ACP] + UDP-N-acetyl-alpha-D-glucosamine = a UDP-3-O-[(3R)-3-hydroxyacyl]-N-acetyl-alpha-D-glucosamine + holo-[ACP]</text>
        <dbReference type="Rhea" id="RHEA:67812"/>
        <dbReference type="Rhea" id="RHEA-COMP:9685"/>
        <dbReference type="Rhea" id="RHEA-COMP:9945"/>
        <dbReference type="ChEBI" id="CHEBI:57705"/>
        <dbReference type="ChEBI" id="CHEBI:64479"/>
        <dbReference type="ChEBI" id="CHEBI:78827"/>
        <dbReference type="ChEBI" id="CHEBI:173225"/>
        <dbReference type="EC" id="2.3.1.129"/>
    </reaction>
</comment>
<comment type="pathway">
    <text evidence="1">Glycolipid biosynthesis; lipid IV(A) biosynthesis; lipid IV(A) from (3R)-3-hydroxytetradecanoyl-[acyl-carrier-protein] and UDP-N-acetyl-alpha-D-glucosamine: step 1/6.</text>
</comment>
<comment type="subunit">
    <text evidence="1">Homotrimer.</text>
</comment>
<comment type="subcellular location">
    <subcellularLocation>
        <location evidence="1">Cytoplasm</location>
    </subcellularLocation>
</comment>
<comment type="similarity">
    <text evidence="1">Belongs to the transferase hexapeptide repeat family. LpxA subfamily.</text>
</comment>
<sequence>MIHETAQIHPTSVVEEGAIIGANVKIGPFCFVDSKVEIGEGTELLSHVVVKGPTKIGRFNRIFQFASIGEACQDLKYAGEDTQLIIGDRNTIRESVTMHRGTVQDKGITIVGSDNLFMINAHVAHDCVIGDRCIFANNATLAGHVKVGNQAIVGGMSAIHQFCHIGDHCMLGGGSIVVQDVPPYVMAQGNHCAPFGINVEGLKRRGFDKAEIHAIRRAYKSLYRNGLTLEAAKAEIAQEAEQYPSVKLFLDFLEKSERGIIR</sequence>
<evidence type="ECO:0000255" key="1">
    <source>
        <dbReference type="HAMAP-Rule" id="MF_00387"/>
    </source>
</evidence>